<sequence>MPIKIPDDLPATSVLEAEGVMVMREADAVRQDIRPLRIGLLNLMPNKVTTETQIARLLGATPLQVELTLVRMTNHVARHTPADHMLSFYCPWEEVNDQRFDGFVITGAPVERLPFEEVTYWDEMRRVFDWTQSHVHRTLNICWAAQAAVYHFHGMKKYDLPAKASGVFRQRSLVPASPYLRGFSDDFAIPVSRWTEVRKSDIPADSGLKVLVDSTETGLCLLDDPRHRSLHMFNHVEYDTTSLADEYFRDIQVQPEAKVPVNYFPGDDAKRPPENRWRSHAHLLFGNWINEMYQSTPYDIERIGKV</sequence>
<name>METAA_BRUMB</name>
<proteinExistence type="inferred from homology"/>
<accession>C0RL20</accession>
<keyword id="KW-0012">Acyltransferase</keyword>
<keyword id="KW-0028">Amino-acid biosynthesis</keyword>
<keyword id="KW-0963">Cytoplasm</keyword>
<keyword id="KW-0486">Methionine biosynthesis</keyword>
<keyword id="KW-0808">Transferase</keyword>
<organism>
    <name type="scientific">Brucella melitensis biotype 2 (strain ATCC 23457)</name>
    <dbReference type="NCBI Taxonomy" id="546272"/>
    <lineage>
        <taxon>Bacteria</taxon>
        <taxon>Pseudomonadati</taxon>
        <taxon>Pseudomonadota</taxon>
        <taxon>Alphaproteobacteria</taxon>
        <taxon>Hyphomicrobiales</taxon>
        <taxon>Brucellaceae</taxon>
        <taxon>Brucella/Ochrobactrum group</taxon>
        <taxon>Brucella</taxon>
    </lineage>
</organism>
<gene>
    <name evidence="1" type="primary">metAA</name>
    <name type="ordered locus">BMEA_B0463</name>
</gene>
<reference key="1">
    <citation type="submission" date="2009-03" db="EMBL/GenBank/DDBJ databases">
        <title>Brucella melitensis ATCC 23457 whole genome shotgun sequencing project.</title>
        <authorList>
            <person name="Setubal J.C."/>
            <person name="Boyle S."/>
            <person name="Crasta O.R."/>
            <person name="Gillespie J.J."/>
            <person name="Kenyon R.W."/>
            <person name="Lu J."/>
            <person name="Mane S."/>
            <person name="Nagrani S."/>
            <person name="Shallom J.M."/>
            <person name="Shallom S."/>
            <person name="Shukla M."/>
            <person name="Snyder E.E."/>
            <person name="Sobral B.W."/>
            <person name="Wattam A.R."/>
            <person name="Will R."/>
            <person name="Williams K."/>
            <person name="Yoo H."/>
            <person name="Munk C."/>
            <person name="Tapia R."/>
            <person name="Han C."/>
            <person name="Detter J.C."/>
            <person name="Bruce D."/>
            <person name="Brettin T.S."/>
        </authorList>
    </citation>
    <scope>NUCLEOTIDE SEQUENCE [LARGE SCALE GENOMIC DNA]</scope>
    <source>
        <strain>ATCC 23457</strain>
    </source>
</reference>
<feature type="chain" id="PRO_1000132701" description="Homoserine O-acetyltransferase">
    <location>
        <begin position="1"/>
        <end position="306"/>
    </location>
</feature>
<feature type="active site" description="Acyl-thioester intermediate" evidence="1">
    <location>
        <position position="142"/>
    </location>
</feature>
<feature type="active site" description="Proton acceptor" evidence="1">
    <location>
        <position position="235"/>
    </location>
</feature>
<feature type="active site" evidence="1">
    <location>
        <position position="237"/>
    </location>
</feature>
<feature type="binding site" evidence="1">
    <location>
        <position position="163"/>
    </location>
    <ligand>
        <name>substrate</name>
    </ligand>
</feature>
<feature type="binding site" evidence="1">
    <location>
        <position position="192"/>
    </location>
    <ligand>
        <name>substrate</name>
    </ligand>
</feature>
<feature type="binding site" evidence="1">
    <location>
        <position position="249"/>
    </location>
    <ligand>
        <name>substrate</name>
    </ligand>
</feature>
<feature type="site" description="Important for acyl-CoA specificity" evidence="1">
    <location>
        <position position="111"/>
    </location>
</feature>
<feature type="site" description="Important for substrate specificity" evidence="1">
    <location>
        <position position="192"/>
    </location>
</feature>
<protein>
    <recommendedName>
        <fullName evidence="1">Homoserine O-acetyltransferase</fullName>
        <shortName evidence="1">HAT</shortName>
        <ecNumber evidence="1">2.3.1.31</ecNumber>
    </recommendedName>
    <alternativeName>
        <fullName evidence="1">Homoserine transacetylase</fullName>
        <shortName evidence="1">HTA</shortName>
    </alternativeName>
</protein>
<comment type="function">
    <text evidence="1">Transfers an acetyl group from acetyl-CoA to L-homoserine, forming acetyl-L-homoserine.</text>
</comment>
<comment type="catalytic activity">
    <reaction evidence="1">
        <text>L-homoserine + acetyl-CoA = O-acetyl-L-homoserine + CoA</text>
        <dbReference type="Rhea" id="RHEA:13701"/>
        <dbReference type="ChEBI" id="CHEBI:57287"/>
        <dbReference type="ChEBI" id="CHEBI:57288"/>
        <dbReference type="ChEBI" id="CHEBI:57476"/>
        <dbReference type="ChEBI" id="CHEBI:57716"/>
        <dbReference type="EC" id="2.3.1.31"/>
    </reaction>
</comment>
<comment type="pathway">
    <text evidence="1">Amino-acid biosynthesis; L-methionine biosynthesis via de novo pathway; O-acetyl-L-homoserine from L-homoserine: step 1/1.</text>
</comment>
<comment type="subcellular location">
    <subcellularLocation>
        <location evidence="1">Cytoplasm</location>
    </subcellularLocation>
</comment>
<comment type="similarity">
    <text evidence="1">Belongs to the MetA family.</text>
</comment>
<evidence type="ECO:0000255" key="1">
    <source>
        <dbReference type="HAMAP-Rule" id="MF_00295"/>
    </source>
</evidence>
<dbReference type="EC" id="2.3.1.31" evidence="1"/>
<dbReference type="EMBL" id="CP001489">
    <property type="protein sequence ID" value="ACO02303.1"/>
    <property type="molecule type" value="Genomic_DNA"/>
</dbReference>
<dbReference type="SMR" id="C0RL20"/>
<dbReference type="KEGG" id="bmi:BMEA_B0463"/>
<dbReference type="HOGENOM" id="CLU_057851_0_1_5"/>
<dbReference type="UniPathway" id="UPA00051">
    <property type="reaction ID" value="UER00074"/>
</dbReference>
<dbReference type="Proteomes" id="UP000001748">
    <property type="component" value="Chromosome II"/>
</dbReference>
<dbReference type="GO" id="GO:0005737">
    <property type="term" value="C:cytoplasm"/>
    <property type="evidence" value="ECO:0007669"/>
    <property type="project" value="UniProtKB-SubCell"/>
</dbReference>
<dbReference type="GO" id="GO:0004414">
    <property type="term" value="F:homoserine O-acetyltransferase activity"/>
    <property type="evidence" value="ECO:0007669"/>
    <property type="project" value="UniProtKB-EC"/>
</dbReference>
<dbReference type="GO" id="GO:0008899">
    <property type="term" value="F:homoserine O-succinyltransferase activity"/>
    <property type="evidence" value="ECO:0007669"/>
    <property type="project" value="UniProtKB-UniRule"/>
</dbReference>
<dbReference type="GO" id="GO:0019281">
    <property type="term" value="P:L-methionine biosynthetic process from homoserine via O-succinyl-L-homoserine and cystathionine"/>
    <property type="evidence" value="ECO:0007669"/>
    <property type="project" value="InterPro"/>
</dbReference>
<dbReference type="CDD" id="cd03131">
    <property type="entry name" value="GATase1_HTS"/>
    <property type="match status" value="1"/>
</dbReference>
<dbReference type="Gene3D" id="3.40.50.880">
    <property type="match status" value="1"/>
</dbReference>
<dbReference type="HAMAP" id="MF_00295">
    <property type="entry name" value="MetA_acyltransf"/>
    <property type="match status" value="1"/>
</dbReference>
<dbReference type="InterPro" id="IPR029062">
    <property type="entry name" value="Class_I_gatase-like"/>
</dbReference>
<dbReference type="InterPro" id="IPR005697">
    <property type="entry name" value="HST_MetA"/>
</dbReference>
<dbReference type="InterPro" id="IPR033752">
    <property type="entry name" value="MetA_family"/>
</dbReference>
<dbReference type="NCBIfam" id="TIGR01001">
    <property type="entry name" value="metA"/>
    <property type="match status" value="1"/>
</dbReference>
<dbReference type="PANTHER" id="PTHR20919">
    <property type="entry name" value="HOMOSERINE O-SUCCINYLTRANSFERASE"/>
    <property type="match status" value="1"/>
</dbReference>
<dbReference type="PANTHER" id="PTHR20919:SF0">
    <property type="entry name" value="HOMOSERINE O-SUCCINYLTRANSFERASE"/>
    <property type="match status" value="1"/>
</dbReference>
<dbReference type="Pfam" id="PF04204">
    <property type="entry name" value="HTS"/>
    <property type="match status" value="1"/>
</dbReference>
<dbReference type="PIRSF" id="PIRSF000450">
    <property type="entry name" value="H_ser_succinyltr"/>
    <property type="match status" value="1"/>
</dbReference>
<dbReference type="SUPFAM" id="SSF52317">
    <property type="entry name" value="Class I glutamine amidotransferase-like"/>
    <property type="match status" value="1"/>
</dbReference>